<sequence length="461" mass="52043">MLKILLPTLMLIPSTWLTNKKWLWPSLTSQSLIISLLSLMWFFNQSETTHFSNYLMTIDQISTPLLILTCWLLPLMLIASQNHLSNEPISRQRTFITMLVFLQLSLIMAFSATELILFYIMFEITLIPTLIIITRWGNQAERLNAGTYFLFYTLAGSLPLLVALLSLYSSTGTLSLNLLQLLPNHIPMTWANYSWWLACLLAFMVKMPLYGTHLWLPKAHVEAPIAGSMVLAAILLKLGGYGIIRISITLSPSMKELAYPFLILSLWGIIMTSSICLRQTDLKSMIAYSSVSHMGLVISAGNNQTPMKALTGAMILNTSDGLTHSALCCLAKYQSYERTHSRALLLSRGLETILPLMGTWWLISNLANMALPPSPNWMGEITIMTALFNWSSWTIILTDLGTLLTASYSLYMFLMTQRGMTPEHLNAINPTHTREHTLMTMHLIPIIPLMMKPELIWGLFF</sequence>
<comment type="function">
    <text evidence="1">Core subunit of the mitochondrial membrane respiratory chain NADH dehydrogenase (Complex I) that is believed to belong to the minimal assembly required for catalysis. Complex I functions in the transfer of electrons from NADH to the respiratory chain. The immediate electron acceptor for the enzyme is believed to be ubiquinone (By similarity).</text>
</comment>
<comment type="catalytic activity">
    <reaction>
        <text>a ubiquinone + NADH + 5 H(+)(in) = a ubiquinol + NAD(+) + 4 H(+)(out)</text>
        <dbReference type="Rhea" id="RHEA:29091"/>
        <dbReference type="Rhea" id="RHEA-COMP:9565"/>
        <dbReference type="Rhea" id="RHEA-COMP:9566"/>
        <dbReference type="ChEBI" id="CHEBI:15378"/>
        <dbReference type="ChEBI" id="CHEBI:16389"/>
        <dbReference type="ChEBI" id="CHEBI:17976"/>
        <dbReference type="ChEBI" id="CHEBI:57540"/>
        <dbReference type="ChEBI" id="CHEBI:57945"/>
        <dbReference type="EC" id="7.1.1.2"/>
    </reaction>
</comment>
<comment type="subcellular location">
    <subcellularLocation>
        <location evidence="1">Mitochondrion membrane</location>
        <topology evidence="1">Multi-pass membrane protein</topology>
    </subcellularLocation>
</comment>
<comment type="similarity">
    <text evidence="3">Belongs to the complex I subunit 4 family.</text>
</comment>
<dbReference type="EC" id="7.1.1.2"/>
<dbReference type="EMBL" id="M10217">
    <property type="protein sequence ID" value="AAA66467.1"/>
    <property type="molecule type" value="Genomic_DNA"/>
</dbReference>
<dbReference type="PIR" id="A00441">
    <property type="entry name" value="QXXL4M"/>
</dbReference>
<dbReference type="RefSeq" id="NP_008143.1">
    <property type="nucleotide sequence ID" value="NC_001573.1"/>
</dbReference>
<dbReference type="SMR" id="P03912"/>
<dbReference type="GeneID" id="2642077"/>
<dbReference type="KEGG" id="xla:2642077"/>
<dbReference type="CTD" id="4538"/>
<dbReference type="OrthoDB" id="564260at2759"/>
<dbReference type="Proteomes" id="UP000186698">
    <property type="component" value="Mitochondrion MT"/>
</dbReference>
<dbReference type="Bgee" id="2642077">
    <property type="expression patterns" value="Expressed in egg cell and 19 other cell types or tissues"/>
</dbReference>
<dbReference type="GO" id="GO:0031966">
    <property type="term" value="C:mitochondrial membrane"/>
    <property type="evidence" value="ECO:0007669"/>
    <property type="project" value="UniProtKB-SubCell"/>
</dbReference>
<dbReference type="GO" id="GO:0045271">
    <property type="term" value="C:respiratory chain complex I"/>
    <property type="evidence" value="ECO:0000318"/>
    <property type="project" value="GO_Central"/>
</dbReference>
<dbReference type="GO" id="GO:0008137">
    <property type="term" value="F:NADH dehydrogenase (ubiquinone) activity"/>
    <property type="evidence" value="ECO:0007669"/>
    <property type="project" value="UniProtKB-EC"/>
</dbReference>
<dbReference type="GO" id="GO:0048039">
    <property type="term" value="F:ubiquinone binding"/>
    <property type="evidence" value="ECO:0000318"/>
    <property type="project" value="GO_Central"/>
</dbReference>
<dbReference type="GO" id="GO:0009060">
    <property type="term" value="P:aerobic respiration"/>
    <property type="evidence" value="ECO:0000318"/>
    <property type="project" value="GO_Central"/>
</dbReference>
<dbReference type="GO" id="GO:0042773">
    <property type="term" value="P:ATP synthesis coupled electron transport"/>
    <property type="evidence" value="ECO:0007669"/>
    <property type="project" value="InterPro"/>
</dbReference>
<dbReference type="GO" id="GO:0015990">
    <property type="term" value="P:electron transport coupled proton transport"/>
    <property type="evidence" value="ECO:0000318"/>
    <property type="project" value="GO_Central"/>
</dbReference>
<dbReference type="InterPro" id="IPR000260">
    <property type="entry name" value="NADH4_N"/>
</dbReference>
<dbReference type="InterPro" id="IPR010227">
    <property type="entry name" value="NADH_Q_OxRdtase_chainM/4"/>
</dbReference>
<dbReference type="InterPro" id="IPR003918">
    <property type="entry name" value="NADH_UbQ_OxRdtase"/>
</dbReference>
<dbReference type="InterPro" id="IPR001750">
    <property type="entry name" value="ND/Mrp_TM"/>
</dbReference>
<dbReference type="NCBIfam" id="TIGR01972">
    <property type="entry name" value="NDH_I_M"/>
    <property type="match status" value="1"/>
</dbReference>
<dbReference type="PANTHER" id="PTHR43507">
    <property type="entry name" value="NADH-UBIQUINONE OXIDOREDUCTASE CHAIN 4"/>
    <property type="match status" value="1"/>
</dbReference>
<dbReference type="PANTHER" id="PTHR43507:SF20">
    <property type="entry name" value="NADH-UBIQUINONE OXIDOREDUCTASE CHAIN 4"/>
    <property type="match status" value="1"/>
</dbReference>
<dbReference type="Pfam" id="PF01059">
    <property type="entry name" value="Oxidored_q5_N"/>
    <property type="match status" value="1"/>
</dbReference>
<dbReference type="Pfam" id="PF00361">
    <property type="entry name" value="Proton_antipo_M"/>
    <property type="match status" value="1"/>
</dbReference>
<dbReference type="PRINTS" id="PR01437">
    <property type="entry name" value="NUOXDRDTASE4"/>
</dbReference>
<evidence type="ECO:0000250" key="1"/>
<evidence type="ECO:0000255" key="2"/>
<evidence type="ECO:0000305" key="3"/>
<gene>
    <name type="primary">mt-nd4</name>
    <name type="synonym">mtnd4</name>
    <name type="synonym">nadh4</name>
    <name type="synonym">nd4</name>
</gene>
<organism>
    <name type="scientific">Xenopus laevis</name>
    <name type="common">African clawed frog</name>
    <dbReference type="NCBI Taxonomy" id="8355"/>
    <lineage>
        <taxon>Eukaryota</taxon>
        <taxon>Metazoa</taxon>
        <taxon>Chordata</taxon>
        <taxon>Craniata</taxon>
        <taxon>Vertebrata</taxon>
        <taxon>Euteleostomi</taxon>
        <taxon>Amphibia</taxon>
        <taxon>Batrachia</taxon>
        <taxon>Anura</taxon>
        <taxon>Pipoidea</taxon>
        <taxon>Pipidae</taxon>
        <taxon>Xenopodinae</taxon>
        <taxon>Xenopus</taxon>
        <taxon>Xenopus</taxon>
    </lineage>
</organism>
<protein>
    <recommendedName>
        <fullName>NADH-ubiquinone oxidoreductase chain 4</fullName>
        <ecNumber>7.1.1.2</ecNumber>
    </recommendedName>
    <alternativeName>
        <fullName>NADH dehydrogenase subunit 4</fullName>
    </alternativeName>
</protein>
<feature type="chain" id="PRO_0000118004" description="NADH-ubiquinone oxidoreductase chain 4">
    <location>
        <begin position="1"/>
        <end position="461"/>
    </location>
</feature>
<feature type="transmembrane region" description="Helical" evidence="2">
    <location>
        <begin position="23"/>
        <end position="43"/>
    </location>
</feature>
<feature type="transmembrane region" description="Helical" evidence="2">
    <location>
        <begin position="58"/>
        <end position="78"/>
    </location>
</feature>
<feature type="transmembrane region" description="Helical" evidence="2">
    <location>
        <begin position="92"/>
        <end position="112"/>
    </location>
</feature>
<feature type="transmembrane region" description="Helical" evidence="2">
    <location>
        <begin position="113"/>
        <end position="133"/>
    </location>
</feature>
<feature type="transmembrane region" description="Helical" evidence="2">
    <location>
        <begin position="148"/>
        <end position="168"/>
    </location>
</feature>
<feature type="transmembrane region" description="Helical" evidence="2">
    <location>
        <begin position="196"/>
        <end position="216"/>
    </location>
</feature>
<feature type="transmembrane region" description="Helical" evidence="2">
    <location>
        <begin position="224"/>
        <end position="244"/>
    </location>
</feature>
<feature type="transmembrane region" description="Helical" evidence="2">
    <location>
        <begin position="257"/>
        <end position="277"/>
    </location>
</feature>
<feature type="transmembrane region" description="Helical" evidence="2">
    <location>
        <begin position="353"/>
        <end position="373"/>
    </location>
</feature>
<feature type="transmembrane region" description="Helical" evidence="2">
    <location>
        <begin position="395"/>
        <end position="415"/>
    </location>
</feature>
<name>NU4M_XENLA</name>
<accession>P03912</accession>
<keyword id="KW-0249">Electron transport</keyword>
<keyword id="KW-0472">Membrane</keyword>
<keyword id="KW-0496">Mitochondrion</keyword>
<keyword id="KW-0520">NAD</keyword>
<keyword id="KW-1185">Reference proteome</keyword>
<keyword id="KW-0679">Respiratory chain</keyword>
<keyword id="KW-1278">Translocase</keyword>
<keyword id="KW-0812">Transmembrane</keyword>
<keyword id="KW-1133">Transmembrane helix</keyword>
<keyword id="KW-0813">Transport</keyword>
<keyword id="KW-0830">Ubiquinone</keyword>
<geneLocation type="mitochondrion"/>
<reference key="1">
    <citation type="journal article" date="1985" name="J. Biol. Chem.">
        <title>The complete nucleotide sequence of the Xenopus laevis mitochondrial genome.</title>
        <authorList>
            <person name="Roe B.A."/>
            <person name="Ma D.-P."/>
            <person name="Wilson R.K."/>
            <person name="Wong J.F.-H."/>
        </authorList>
    </citation>
    <scope>NUCLEOTIDE SEQUENCE [GENOMIC DNA]</scope>
</reference>
<proteinExistence type="inferred from homology"/>